<keyword id="KW-0119">Carbohydrate metabolism</keyword>
<keyword id="KW-0325">Glycoprotein</keyword>
<keyword id="KW-0326">Glycosidase</keyword>
<keyword id="KW-0378">Hydrolase</keyword>
<keyword id="KW-0624">Polysaccharide degradation</keyword>
<keyword id="KW-1185">Reference proteome</keyword>
<keyword id="KW-0964">Secreted</keyword>
<keyword id="KW-0732">Signal</keyword>
<keyword id="KW-0858">Xylan degradation</keyword>
<proteinExistence type="inferred from homology"/>
<sequence length="840" mass="93659">MWSGIPIFALLSSIGIAAAETGLDGWLRYASVPCNGNCQRALPSHIVTLNSTRSSPVYVAGQELQDGLHQILGKHASVKSTGCSTDSSIIVGTVEAYRQVCNAGRQVPQFDVDGFWLSIREKSVLIVGQSERGALYGAYEYLSMLAQGNFSQVSYATSPHAPIRWVNQWDNMDGSIERGYGGPSIFFKDGVIRQDLSRVQQYARLLASVRINGIIVNNVNANASLLMPSNMDGLARIADIFRPYGIRVGISLNFASPSTLGNLSTYDPFDSSVIAWWGNVTDQLYARIPDMAGYLVKANSEGQPGPTTYNRTLADGANMFARALKPYGGVVMFRAFVYDHHISEDNWYNDRANAAVDFFKPLDGKFDDNVVVQIKYGPIDFQVREPASPLFANLYKTNTAIELQVTQEYLGQQSHLVYLPPLWQTILGFDLRVDQKPSLVRDIISGQRFDRPLGGWAAVVNVGTNSTWLGSHLAMSNLYAYGRLAWEPTLDSEDIVQDWIRLTFGLDRRIVDTLTQMSMESWPAYENYSGNLGIQTLTDILYTHYGPNPASQDGNGWGQWTRADHLSIGMDRTVKNGTKFSGQYPAEVAAMYENIETTPDNLLLWFHHVNYTQRLHSGKTVIQHFYDAHYTGAETAQTFVSQWESLRERIDAERYQHVLTRLIYQAGHSIVWRDAINNFYHNLSGIADEKQRVGHHPWRVEAEDMQLDGYVPYAVSPFETASNYTAIVTASNGTTGTASATLDFKTGTYDLGINYYDMYGGKSHWTVYLNDRVVGQWQGNSEDVLSHTPSIYLDGHSATRITFRDVKIHKGDRLKIVGKPDGVEPAPLDYVVVLPPGIVD</sequence>
<gene>
    <name type="primary">aguA</name>
    <name type="ORF">AFUA_5G14380</name>
</gene>
<feature type="signal peptide" evidence="2">
    <location>
        <begin position="1"/>
        <end position="19"/>
    </location>
</feature>
<feature type="chain" id="PRO_0000393488" description="Probable alpha-glucuronidase A">
    <location>
        <begin position="20"/>
        <end position="840"/>
    </location>
</feature>
<feature type="glycosylation site" description="N-linked (GlcNAc...) asparagine" evidence="2">
    <location>
        <position position="50"/>
    </location>
</feature>
<feature type="glycosylation site" description="N-linked (GlcNAc...) asparagine" evidence="2">
    <location>
        <position position="149"/>
    </location>
</feature>
<feature type="glycosylation site" description="N-linked (GlcNAc...) asparagine" evidence="2">
    <location>
        <position position="222"/>
    </location>
</feature>
<feature type="glycosylation site" description="N-linked (GlcNAc...) asparagine" evidence="2">
    <location>
        <position position="262"/>
    </location>
</feature>
<feature type="glycosylation site" description="N-linked (GlcNAc...) asparagine" evidence="2">
    <location>
        <position position="279"/>
    </location>
</feature>
<feature type="glycosylation site" description="N-linked (GlcNAc...) asparagine" evidence="2">
    <location>
        <position position="310"/>
    </location>
</feature>
<feature type="glycosylation site" description="N-linked (GlcNAc...) asparagine" evidence="2">
    <location>
        <position position="465"/>
    </location>
</feature>
<feature type="glycosylation site" description="N-linked (GlcNAc...) asparagine" evidence="2">
    <location>
        <position position="527"/>
    </location>
</feature>
<feature type="glycosylation site" description="N-linked (GlcNAc...) asparagine" evidence="2">
    <location>
        <position position="576"/>
    </location>
</feature>
<feature type="glycosylation site" description="N-linked (GlcNAc...) asparagine" evidence="2">
    <location>
        <position position="610"/>
    </location>
</feature>
<feature type="glycosylation site" description="N-linked (GlcNAc...) asparagine" evidence="2">
    <location>
        <position position="682"/>
    </location>
</feature>
<feature type="glycosylation site" description="N-linked (GlcNAc...) asparagine" evidence="2">
    <location>
        <position position="723"/>
    </location>
</feature>
<feature type="glycosylation site" description="N-linked (GlcNAc...) asparagine" evidence="2">
    <location>
        <position position="732"/>
    </location>
</feature>
<name>AGUA_ASPFU</name>
<organism>
    <name type="scientific">Aspergillus fumigatus (strain ATCC MYA-4609 / CBS 101355 / FGSC A1100 / Af293)</name>
    <name type="common">Neosartorya fumigata</name>
    <dbReference type="NCBI Taxonomy" id="330879"/>
    <lineage>
        <taxon>Eukaryota</taxon>
        <taxon>Fungi</taxon>
        <taxon>Dikarya</taxon>
        <taxon>Ascomycota</taxon>
        <taxon>Pezizomycotina</taxon>
        <taxon>Eurotiomycetes</taxon>
        <taxon>Eurotiomycetidae</taxon>
        <taxon>Eurotiales</taxon>
        <taxon>Aspergillaceae</taxon>
        <taxon>Aspergillus</taxon>
        <taxon>Aspergillus subgen. Fumigati</taxon>
    </lineage>
</organism>
<dbReference type="EC" id="3.2.1.139"/>
<dbReference type="EMBL" id="AAHF01000003">
    <property type="protein sequence ID" value="EAL91181.1"/>
    <property type="molecule type" value="Genomic_DNA"/>
</dbReference>
<dbReference type="RefSeq" id="XP_753219.1">
    <property type="nucleotide sequence ID" value="XM_748126.1"/>
</dbReference>
<dbReference type="SMR" id="Q4WW45"/>
<dbReference type="STRING" id="330879.Q4WW45"/>
<dbReference type="GlyCosmos" id="Q4WW45">
    <property type="glycosylation" value="13 sites, No reported glycans"/>
</dbReference>
<dbReference type="EnsemblFungi" id="EAL91181">
    <property type="protein sequence ID" value="EAL91181"/>
    <property type="gene ID" value="AFUA_5G14380"/>
</dbReference>
<dbReference type="GeneID" id="3511012"/>
<dbReference type="KEGG" id="afm:AFUA_5G14380"/>
<dbReference type="VEuPathDB" id="FungiDB:Afu5g14380"/>
<dbReference type="eggNOG" id="ENOG502QWS4">
    <property type="taxonomic scope" value="Eukaryota"/>
</dbReference>
<dbReference type="HOGENOM" id="CLU_007125_2_0_1"/>
<dbReference type="InParanoid" id="Q4WW45"/>
<dbReference type="OMA" id="IWRAFVY"/>
<dbReference type="OrthoDB" id="6501611at2759"/>
<dbReference type="Proteomes" id="UP000002530">
    <property type="component" value="Chromosome 5"/>
</dbReference>
<dbReference type="GO" id="GO:0005576">
    <property type="term" value="C:extracellular region"/>
    <property type="evidence" value="ECO:0007669"/>
    <property type="project" value="UniProtKB-SubCell"/>
</dbReference>
<dbReference type="GO" id="GO:0046559">
    <property type="term" value="F:alpha-glucuronidase activity"/>
    <property type="evidence" value="ECO:0000314"/>
    <property type="project" value="AspGD"/>
</dbReference>
<dbReference type="GO" id="GO:0045493">
    <property type="term" value="P:xylan catabolic process"/>
    <property type="evidence" value="ECO:0007669"/>
    <property type="project" value="UniProtKB-KW"/>
</dbReference>
<dbReference type="CDD" id="cd02795">
    <property type="entry name" value="CBM6-CBM35-CBM36_like"/>
    <property type="match status" value="1"/>
</dbReference>
<dbReference type="FunFam" id="3.30.379.10:FF:000007">
    <property type="entry name" value="Alpha-glucuronidase A"/>
    <property type="match status" value="1"/>
</dbReference>
<dbReference type="FunFam" id="3.20.20.80:FF:000096">
    <property type="entry name" value="Xylan alpha-1,2-glucuronidase"/>
    <property type="match status" value="1"/>
</dbReference>
<dbReference type="FunFam" id="3.90.1330.10:FF:000001">
    <property type="entry name" value="Xylan alpha-1,2-glucuronidase"/>
    <property type="match status" value="1"/>
</dbReference>
<dbReference type="Gene3D" id="3.90.1330.10">
    <property type="entry name" value="Alpha-glucuronidase, C-terminal domain"/>
    <property type="match status" value="1"/>
</dbReference>
<dbReference type="Gene3D" id="3.30.379.10">
    <property type="entry name" value="Chitobiase/beta-hexosaminidase domain 2-like"/>
    <property type="match status" value="1"/>
</dbReference>
<dbReference type="Gene3D" id="3.20.20.80">
    <property type="entry name" value="Glycosidases"/>
    <property type="match status" value="1"/>
</dbReference>
<dbReference type="InterPro" id="IPR037054">
    <property type="entry name" value="A-glucoronidase_C_sf"/>
</dbReference>
<dbReference type="InterPro" id="IPR011395">
    <property type="entry name" value="Glyco_hydro_67_aGlcAse"/>
</dbReference>
<dbReference type="InterPro" id="IPR005154">
    <property type="entry name" value="Glyco_hydro_67_aGlcAse_N"/>
</dbReference>
<dbReference type="InterPro" id="IPR011099">
    <property type="entry name" value="Glyco_hydro_67_C"/>
</dbReference>
<dbReference type="InterPro" id="IPR011100">
    <property type="entry name" value="Glyco_hydro_67_cat"/>
</dbReference>
<dbReference type="InterPro" id="IPR017853">
    <property type="entry name" value="Glycoside_hydrolase_SF"/>
</dbReference>
<dbReference type="InterPro" id="IPR029018">
    <property type="entry name" value="Hex-like_dom2"/>
</dbReference>
<dbReference type="PANTHER" id="PTHR39207">
    <property type="entry name" value="ALPHA-GLUCURONIDASE A"/>
    <property type="match status" value="1"/>
</dbReference>
<dbReference type="PANTHER" id="PTHR39207:SF1">
    <property type="entry name" value="ALPHA-GLUCURONIDASE A"/>
    <property type="match status" value="1"/>
</dbReference>
<dbReference type="Pfam" id="PF07477">
    <property type="entry name" value="Glyco_hydro_67C"/>
    <property type="match status" value="1"/>
</dbReference>
<dbReference type="Pfam" id="PF07488">
    <property type="entry name" value="Glyco_hydro_67M"/>
    <property type="match status" value="1"/>
</dbReference>
<dbReference type="Pfam" id="PF03648">
    <property type="entry name" value="Glyco_hydro_67N"/>
    <property type="match status" value="1"/>
</dbReference>
<dbReference type="PIRSF" id="PIRSF029900">
    <property type="entry name" value="Alpha-glucuronds"/>
    <property type="match status" value="1"/>
</dbReference>
<dbReference type="SUPFAM" id="SSF51445">
    <property type="entry name" value="(Trans)glycosidases"/>
    <property type="match status" value="1"/>
</dbReference>
<dbReference type="SUPFAM" id="SSF55545">
    <property type="entry name" value="beta-N-acetylhexosaminidase-like domain"/>
    <property type="match status" value="1"/>
</dbReference>
<evidence type="ECO:0000250" key="1"/>
<evidence type="ECO:0000255" key="2"/>
<evidence type="ECO:0000305" key="3"/>
<accession>Q4WW45</accession>
<reference key="1">
    <citation type="journal article" date="2005" name="Nature">
        <title>Genomic sequence of the pathogenic and allergenic filamentous fungus Aspergillus fumigatus.</title>
        <authorList>
            <person name="Nierman W.C."/>
            <person name="Pain A."/>
            <person name="Anderson M.J."/>
            <person name="Wortman J.R."/>
            <person name="Kim H.S."/>
            <person name="Arroyo J."/>
            <person name="Berriman M."/>
            <person name="Abe K."/>
            <person name="Archer D.B."/>
            <person name="Bermejo C."/>
            <person name="Bennett J.W."/>
            <person name="Bowyer P."/>
            <person name="Chen D."/>
            <person name="Collins M."/>
            <person name="Coulsen R."/>
            <person name="Davies R."/>
            <person name="Dyer P.S."/>
            <person name="Farman M.L."/>
            <person name="Fedorova N."/>
            <person name="Fedorova N.D."/>
            <person name="Feldblyum T.V."/>
            <person name="Fischer R."/>
            <person name="Fosker N."/>
            <person name="Fraser A."/>
            <person name="Garcia J.L."/>
            <person name="Garcia M.J."/>
            <person name="Goble A."/>
            <person name="Goldman G.H."/>
            <person name="Gomi K."/>
            <person name="Griffith-Jones S."/>
            <person name="Gwilliam R."/>
            <person name="Haas B.J."/>
            <person name="Haas H."/>
            <person name="Harris D.E."/>
            <person name="Horiuchi H."/>
            <person name="Huang J."/>
            <person name="Humphray S."/>
            <person name="Jimenez J."/>
            <person name="Keller N."/>
            <person name="Khouri H."/>
            <person name="Kitamoto K."/>
            <person name="Kobayashi T."/>
            <person name="Konzack S."/>
            <person name="Kulkarni R."/>
            <person name="Kumagai T."/>
            <person name="Lafton A."/>
            <person name="Latge J.-P."/>
            <person name="Li W."/>
            <person name="Lord A."/>
            <person name="Lu C."/>
            <person name="Majoros W.H."/>
            <person name="May G.S."/>
            <person name="Miller B.L."/>
            <person name="Mohamoud Y."/>
            <person name="Molina M."/>
            <person name="Monod M."/>
            <person name="Mouyna I."/>
            <person name="Mulligan S."/>
            <person name="Murphy L.D."/>
            <person name="O'Neil S."/>
            <person name="Paulsen I."/>
            <person name="Penalva M.A."/>
            <person name="Pertea M."/>
            <person name="Price C."/>
            <person name="Pritchard B.L."/>
            <person name="Quail M.A."/>
            <person name="Rabbinowitsch E."/>
            <person name="Rawlins N."/>
            <person name="Rajandream M.A."/>
            <person name="Reichard U."/>
            <person name="Renauld H."/>
            <person name="Robson G.D."/>
            <person name="Rodriguez de Cordoba S."/>
            <person name="Rodriguez-Pena J.M."/>
            <person name="Ronning C.M."/>
            <person name="Rutter S."/>
            <person name="Salzberg S.L."/>
            <person name="Sanchez M."/>
            <person name="Sanchez-Ferrero J.C."/>
            <person name="Saunders D."/>
            <person name="Seeger K."/>
            <person name="Squares R."/>
            <person name="Squares S."/>
            <person name="Takeuchi M."/>
            <person name="Tekaia F."/>
            <person name="Turner G."/>
            <person name="Vazquez de Aldana C.R."/>
            <person name="Weidman J."/>
            <person name="White O."/>
            <person name="Woodward J.R."/>
            <person name="Yu J.-H."/>
            <person name="Fraser C.M."/>
            <person name="Galagan J.E."/>
            <person name="Asai K."/>
            <person name="Machida M."/>
            <person name="Hall N."/>
            <person name="Barrell B.G."/>
            <person name="Denning D.W."/>
        </authorList>
    </citation>
    <scope>NUCLEOTIDE SEQUENCE [LARGE SCALE GENOMIC DNA]</scope>
    <source>
        <strain>ATCC MYA-4609 / CBS 101355 / FGSC A1100 / Af293</strain>
    </source>
</reference>
<protein>
    <recommendedName>
        <fullName>Probable alpha-glucuronidase A</fullName>
        <ecNumber>3.2.1.139</ecNumber>
    </recommendedName>
    <alternativeName>
        <fullName>Alpha-glucosiduronase A</fullName>
    </alternativeName>
</protein>
<comment type="function">
    <text evidence="1">Alpha-glucuronidase involved in the hydrolysis of xylan, a major structural heterogeneous polysaccharide found in plant biomass representing the second most abundant polysaccharide in the biosphere, after cellulose. Releases 4-O-methylglucuronic acid from xylan (By similarity).</text>
</comment>
<comment type="catalytic activity">
    <reaction>
        <text>an alpha-D-glucuronoside + H2O = D-glucuronate + an alcohol</text>
        <dbReference type="Rhea" id="RHEA:20005"/>
        <dbReference type="ChEBI" id="CHEBI:15377"/>
        <dbReference type="ChEBI" id="CHEBI:30879"/>
        <dbReference type="ChEBI" id="CHEBI:58720"/>
        <dbReference type="ChEBI" id="CHEBI:58899"/>
        <dbReference type="EC" id="3.2.1.139"/>
    </reaction>
</comment>
<comment type="subcellular location">
    <subcellularLocation>
        <location evidence="1">Secreted</location>
    </subcellularLocation>
</comment>
<comment type="similarity">
    <text evidence="3">Belongs to the glycosyl hydrolase 67 family.</text>
</comment>